<organism>
    <name type="scientific">Methanocaldococcus jannaschii (strain ATCC 43067 / DSM 2661 / JAL-1 / JCM 10045 / NBRC 100440)</name>
    <name type="common">Methanococcus jannaschii</name>
    <dbReference type="NCBI Taxonomy" id="243232"/>
    <lineage>
        <taxon>Archaea</taxon>
        <taxon>Methanobacteriati</taxon>
        <taxon>Methanobacteriota</taxon>
        <taxon>Methanomada group</taxon>
        <taxon>Methanococci</taxon>
        <taxon>Methanococcales</taxon>
        <taxon>Methanocaldococcaceae</taxon>
        <taxon>Methanocaldococcus</taxon>
    </lineage>
</organism>
<keyword id="KW-0067">ATP-binding</keyword>
<keyword id="KW-0460">Magnesium</keyword>
<keyword id="KW-0479">Metal-binding</keyword>
<keyword id="KW-0547">Nucleotide-binding</keyword>
<keyword id="KW-0548">Nucleotidyltransferase</keyword>
<keyword id="KW-1185">Reference proteome</keyword>
<keyword id="KW-1277">Toxin-antitoxin system</keyword>
<keyword id="KW-0808">Transferase</keyword>
<accession>Q57592</accession>
<comment type="function">
    <text evidence="2">Probable antitoxin component of a putative type VII toxin-antitoxin (TA) system. Neutralizes cognate toxic MJ0127 by di-AMPylation.</text>
</comment>
<comment type="catalytic activity">
    <reaction evidence="2">
        <text>L-tyrosyl-[protein] + ATP = O-(5'-adenylyl)-L-tyrosyl-[protein] + diphosphate</text>
        <dbReference type="Rhea" id="RHEA:54288"/>
        <dbReference type="Rhea" id="RHEA-COMP:10136"/>
        <dbReference type="Rhea" id="RHEA-COMP:13846"/>
        <dbReference type="ChEBI" id="CHEBI:30616"/>
        <dbReference type="ChEBI" id="CHEBI:33019"/>
        <dbReference type="ChEBI" id="CHEBI:46858"/>
        <dbReference type="ChEBI" id="CHEBI:83624"/>
        <dbReference type="EC" id="2.7.7.108"/>
    </reaction>
</comment>
<comment type="catalytic activity">
    <reaction evidence="2">
        <text>O-(5'-adenylyl)-L-tyrosyl-[protein] + ATP = O-[5'-(adenylyl-(5'-&gt;3')-adenylyl)]-L-tyrosyl-[protein] + diphosphate</text>
        <dbReference type="Rhea" id="RHEA:66528"/>
        <dbReference type="Rhea" id="RHEA-COMP:13846"/>
        <dbReference type="Rhea" id="RHEA-COMP:17046"/>
        <dbReference type="ChEBI" id="CHEBI:30616"/>
        <dbReference type="ChEBI" id="CHEBI:33019"/>
        <dbReference type="ChEBI" id="CHEBI:83624"/>
        <dbReference type="ChEBI" id="CHEBI:167160"/>
    </reaction>
</comment>
<comment type="cofactor">
    <cofactor evidence="2">
        <name>Mg(2+)</name>
        <dbReference type="ChEBI" id="CHEBI:18420"/>
    </cofactor>
    <text evidence="2">Binds 2 Mg(2+) ions.</text>
</comment>
<comment type="subunit">
    <text evidence="2">Probably forms a complex with cognate toxin MJ0127.</text>
</comment>
<comment type="similarity">
    <text evidence="3">Belongs to the MntA antitoxin family.</text>
</comment>
<evidence type="ECO:0000250" key="1">
    <source>
        <dbReference type="UniProtKB" id="A0A0B0QJN8"/>
    </source>
</evidence>
<evidence type="ECO:0000250" key="2">
    <source>
        <dbReference type="UniProtKB" id="Q8ECH7"/>
    </source>
</evidence>
<evidence type="ECO:0000305" key="3"/>
<dbReference type="EC" id="2.7.7.108" evidence="1"/>
<dbReference type="EMBL" id="L77117">
    <property type="protein sequence ID" value="AAB98108.1"/>
    <property type="molecule type" value="Genomic_DNA"/>
</dbReference>
<dbReference type="PIR" id="H64315">
    <property type="entry name" value="H64315"/>
</dbReference>
<dbReference type="RefSeq" id="WP_010869621.1">
    <property type="nucleotide sequence ID" value="NC_000909.1"/>
</dbReference>
<dbReference type="SMR" id="Q57592"/>
<dbReference type="FunCoup" id="Q57592">
    <property type="interactions" value="1"/>
</dbReference>
<dbReference type="STRING" id="243232.MJ_0128"/>
<dbReference type="PaxDb" id="243232-MJ_0128"/>
<dbReference type="EnsemblBacteria" id="AAB98108">
    <property type="protein sequence ID" value="AAB98108"/>
    <property type="gene ID" value="MJ_0128"/>
</dbReference>
<dbReference type="GeneID" id="1450970"/>
<dbReference type="KEGG" id="mja:MJ_0128"/>
<dbReference type="eggNOG" id="arCOG01206">
    <property type="taxonomic scope" value="Archaea"/>
</dbReference>
<dbReference type="HOGENOM" id="CLU_130257_10_3_2"/>
<dbReference type="InParanoid" id="Q57592"/>
<dbReference type="OrthoDB" id="64953at2157"/>
<dbReference type="PhylomeDB" id="Q57592"/>
<dbReference type="Proteomes" id="UP000000805">
    <property type="component" value="Chromosome"/>
</dbReference>
<dbReference type="GO" id="GO:0005524">
    <property type="term" value="F:ATP binding"/>
    <property type="evidence" value="ECO:0007669"/>
    <property type="project" value="UniProtKB-KW"/>
</dbReference>
<dbReference type="GO" id="GO:0046872">
    <property type="term" value="F:metal ion binding"/>
    <property type="evidence" value="ECO:0007669"/>
    <property type="project" value="UniProtKB-KW"/>
</dbReference>
<dbReference type="GO" id="GO:0016779">
    <property type="term" value="F:nucleotidyltransferase activity"/>
    <property type="evidence" value="ECO:0007669"/>
    <property type="project" value="UniProtKB-KW"/>
</dbReference>
<dbReference type="CDD" id="cd05403">
    <property type="entry name" value="NT_KNTase_like"/>
    <property type="match status" value="1"/>
</dbReference>
<dbReference type="Gene3D" id="3.30.460.10">
    <property type="entry name" value="Beta Polymerase, domain 2"/>
    <property type="match status" value="1"/>
</dbReference>
<dbReference type="InterPro" id="IPR043519">
    <property type="entry name" value="NT_sf"/>
</dbReference>
<dbReference type="InterPro" id="IPR002934">
    <property type="entry name" value="Polymerase_NTP_transf_dom"/>
</dbReference>
<dbReference type="InterPro" id="IPR052038">
    <property type="entry name" value="Type-VII_TA_antitoxin"/>
</dbReference>
<dbReference type="PANTHER" id="PTHR33571:SF19">
    <property type="entry name" value="PROTEIN ADENYLYLTRANSFERASE MJ0128-RELATED"/>
    <property type="match status" value="1"/>
</dbReference>
<dbReference type="PANTHER" id="PTHR33571">
    <property type="entry name" value="SSL8005 PROTEIN"/>
    <property type="match status" value="1"/>
</dbReference>
<dbReference type="Pfam" id="PF01909">
    <property type="entry name" value="NTP_transf_2"/>
    <property type="match status" value="1"/>
</dbReference>
<dbReference type="SUPFAM" id="SSF81301">
    <property type="entry name" value="Nucleotidyltransferase"/>
    <property type="match status" value="1"/>
</dbReference>
<sequence>MKTISEIKDILRKHKKILKEKYKVKSIAIFGSYARNEQTEKSDIDILVEFYETPDYLKFFELEDYLSDLLGIKVDLVIKGAIKNPYIKKSIEEDLIYV</sequence>
<gene>
    <name type="ordered locus">MJ0128</name>
</gene>
<protein>
    <recommendedName>
        <fullName>Putative protein adenylyltransferase MJ0128</fullName>
        <ecNumber evidence="1">2.7.7.108</ecNumber>
    </recommendedName>
    <alternativeName>
        <fullName>Putative antitoxin MJ0128</fullName>
    </alternativeName>
</protein>
<proteinExistence type="inferred from homology"/>
<reference key="1">
    <citation type="journal article" date="1996" name="Science">
        <title>Complete genome sequence of the methanogenic archaeon, Methanococcus jannaschii.</title>
        <authorList>
            <person name="Bult C.J."/>
            <person name="White O."/>
            <person name="Olsen G.J."/>
            <person name="Zhou L."/>
            <person name="Fleischmann R.D."/>
            <person name="Sutton G.G."/>
            <person name="Blake J.A."/>
            <person name="FitzGerald L.M."/>
            <person name="Clayton R.A."/>
            <person name="Gocayne J.D."/>
            <person name="Kerlavage A.R."/>
            <person name="Dougherty B.A."/>
            <person name="Tomb J.-F."/>
            <person name="Adams M.D."/>
            <person name="Reich C.I."/>
            <person name="Overbeek R."/>
            <person name="Kirkness E.F."/>
            <person name="Weinstock K.G."/>
            <person name="Merrick J.M."/>
            <person name="Glodek A."/>
            <person name="Scott J.L."/>
            <person name="Geoghagen N.S.M."/>
            <person name="Weidman J.F."/>
            <person name="Fuhrmann J.L."/>
            <person name="Nguyen D."/>
            <person name="Utterback T.R."/>
            <person name="Kelley J.M."/>
            <person name="Peterson J.D."/>
            <person name="Sadow P.W."/>
            <person name="Hanna M.C."/>
            <person name="Cotton M.D."/>
            <person name="Roberts K.M."/>
            <person name="Hurst M.A."/>
            <person name="Kaine B.P."/>
            <person name="Borodovsky M."/>
            <person name="Klenk H.-P."/>
            <person name="Fraser C.M."/>
            <person name="Smith H.O."/>
            <person name="Woese C.R."/>
            <person name="Venter J.C."/>
        </authorList>
    </citation>
    <scope>NUCLEOTIDE SEQUENCE [LARGE SCALE GENOMIC DNA]</scope>
    <source>
        <strain>ATCC 43067 / DSM 2661 / JAL-1 / JCM 10045 / NBRC 100440</strain>
    </source>
</reference>
<feature type="chain" id="PRO_0000106706" description="Putative protein adenylyltransferase MJ0128">
    <location>
        <begin position="1"/>
        <end position="98"/>
    </location>
</feature>
<feature type="short sequence motif" description="GSX(10)DXD motif" evidence="2">
    <location>
        <begin position="31"/>
        <end position="45"/>
    </location>
</feature>
<feature type="binding site" evidence="2">
    <location>
        <position position="43"/>
    </location>
    <ligand>
        <name>Mg(2+)</name>
        <dbReference type="ChEBI" id="CHEBI:18420"/>
        <label>1</label>
    </ligand>
</feature>
<feature type="binding site" evidence="2">
    <location>
        <position position="43"/>
    </location>
    <ligand>
        <name>Mg(2+)</name>
        <dbReference type="ChEBI" id="CHEBI:18420"/>
        <label>2</label>
    </ligand>
</feature>
<feature type="binding site" evidence="2">
    <location>
        <position position="45"/>
    </location>
    <ligand>
        <name>Mg(2+)</name>
        <dbReference type="ChEBI" id="CHEBI:18420"/>
        <label>1</label>
    </ligand>
</feature>
<feature type="binding site" evidence="2">
    <location>
        <position position="45"/>
    </location>
    <ligand>
        <name>Mg(2+)</name>
        <dbReference type="ChEBI" id="CHEBI:18420"/>
        <label>2</label>
    </ligand>
</feature>
<feature type="binding site" evidence="2">
    <location>
        <position position="75"/>
    </location>
    <ligand>
        <name>Mg(2+)</name>
        <dbReference type="ChEBI" id="CHEBI:18420"/>
        <label>1</label>
    </ligand>
</feature>
<name>Y128_METJA</name>